<name>ADDA_STAA3</name>
<organism>
    <name type="scientific">Staphylococcus aureus (strain USA300)</name>
    <dbReference type="NCBI Taxonomy" id="367830"/>
    <lineage>
        <taxon>Bacteria</taxon>
        <taxon>Bacillati</taxon>
        <taxon>Bacillota</taxon>
        <taxon>Bacilli</taxon>
        <taxon>Bacillales</taxon>
        <taxon>Staphylococcaceae</taxon>
        <taxon>Staphylococcus</taxon>
    </lineage>
</organism>
<proteinExistence type="inferred from homology"/>
<protein>
    <recommendedName>
        <fullName evidence="1">ATP-dependent helicase/nuclease subunit A</fullName>
        <ecNumber evidence="1">3.1.-.-</ecNumber>
        <ecNumber evidence="1">5.6.2.4</ecNumber>
    </recommendedName>
    <alternativeName>
        <fullName evidence="1">ATP-dependent helicase/nuclease AddA</fullName>
    </alternativeName>
    <alternativeName>
        <fullName evidence="1">DNA 3'-5' helicase AddA</fullName>
    </alternativeName>
</protein>
<sequence length="1217" mass="141288">MTIPEKPQGVIWTDAQWQSIYATGQDVLVAAAAGSGKTAVLVERIIQKILRDGIDVDRLLVVTFTNLSAREMKHRVDQRIQEASIADPANAHLKNQRIKIHQAQISTLHSFCLKLIQQHYDVLNIDPNFRTSSEAENILLLEQTIDEVIEQHYDILDPAFIELTEQLSSDRSDDQFRMIIKQLYFFSVANPNPKNWLDQLVTPYEEEAQQAQLIQLLTDLSKVFITAAYDALNKAYDLFSMMDSVDKHLAVIEDERRLMGRVLEGGFIDIPYLTGHEFGARLPNVTAKIKEANEMMVDALEDAKLQYKKYKSLIDKVKSDYFSREADDLKADMQQLAPRVKYLARIVKDVMSEFNRKKRSKNILDFSDYEHFALQILTNEDGSPSEIAESYRQHFQEILVDEYQDTNRVQEKILSCIKTGDEHNGNLFMVGDVKQSIYKFRQADPSLFIEKYQRFTIDGDGTGRRIDLSQNFRSRKEVLSTTNYIFKHMMDEQVGEVKYDEAAQLYYGAPYDESDHPVNLKVLVEADQEHSDLTGSEQEAHFIVEQVKDILEHQKVYDMKTGSYRSATYKDIVILERSFGQARNLQQAFKNEDIPFHVNSREGYFEQTEVRLVLSFLRAIDNPLQDIYLVGLMRSVIYQFKEDELAQIRILSPNDDYFYQSIVNYINDEAADAILVDKLKMFLSDIQSYQQYSKDHPVYQLIDKFYNDHYVIQYFSGLIGGRGRRANLYGLFNKAIEFENSSFRGLYQFIRFIDELIERGKDFGEENVVGPNDNVVRMMTIHSSKGLEFPFVIYSGLSKDFNKRDLKQPVILNQQFGLGMDYFDVDKEMAFPSLASVAYRAVAEKELVSEEMRLVYVALTRAKEQLYLIGRVKNDKSLLELEQLSISGEHIAVNERLTSPNPFHLIYSILSKHQSASIPDDLKFEKDIAQIEDSSRPNVNISIVYFEDVSTETILDNDEYRSVNQLETMQNGNEDVKAQIKHQLDYRYPYVNDTKKPSKQSVSELKRQYETEESGTSYERVRQYRIGFSTYERPKFLSEQGKRKANEIGTLMHTVMQHLPFKKERISEVELHQYIDGLIDKHIIEADAKKDIRMDEIMTFINSELYSIIAEAEQVYRELPFVVNQALVDQLPQGDEDVSIIQGMIDLIFVKDGVHYFVDYKTDAFNRRRGMTDEEIGTQLKNKYKIQMKYYQNTLQTILNKEVKGYLYFFKFGTLQL</sequence>
<dbReference type="EC" id="3.1.-.-" evidence="1"/>
<dbReference type="EC" id="5.6.2.4" evidence="1"/>
<dbReference type="EMBL" id="CP000255">
    <property type="protein sequence ID" value="ABD22486.1"/>
    <property type="molecule type" value="Genomic_DNA"/>
</dbReference>
<dbReference type="RefSeq" id="WP_000154914.1">
    <property type="nucleotide sequence ID" value="NZ_CP027476.1"/>
</dbReference>
<dbReference type="SMR" id="Q2FIA8"/>
<dbReference type="KEGG" id="saa:SAUSA300_0870"/>
<dbReference type="HOGENOM" id="CLU_001114_3_1_9"/>
<dbReference type="OMA" id="EFSDIAH"/>
<dbReference type="Proteomes" id="UP000001939">
    <property type="component" value="Chromosome"/>
</dbReference>
<dbReference type="GO" id="GO:0005829">
    <property type="term" value="C:cytosol"/>
    <property type="evidence" value="ECO:0007669"/>
    <property type="project" value="TreeGrafter"/>
</dbReference>
<dbReference type="GO" id="GO:0033202">
    <property type="term" value="C:DNA helicase complex"/>
    <property type="evidence" value="ECO:0007669"/>
    <property type="project" value="TreeGrafter"/>
</dbReference>
<dbReference type="GO" id="GO:0043138">
    <property type="term" value="F:3'-5' DNA helicase activity"/>
    <property type="evidence" value="ECO:0007669"/>
    <property type="project" value="UniProtKB-UniRule"/>
</dbReference>
<dbReference type="GO" id="GO:0008408">
    <property type="term" value="F:3'-5' exonuclease activity"/>
    <property type="evidence" value="ECO:0007669"/>
    <property type="project" value="UniProtKB-UniRule"/>
</dbReference>
<dbReference type="GO" id="GO:0005524">
    <property type="term" value="F:ATP binding"/>
    <property type="evidence" value="ECO:0007669"/>
    <property type="project" value="UniProtKB-UniRule"/>
</dbReference>
<dbReference type="GO" id="GO:0016887">
    <property type="term" value="F:ATP hydrolysis activity"/>
    <property type="evidence" value="ECO:0007669"/>
    <property type="project" value="RHEA"/>
</dbReference>
<dbReference type="GO" id="GO:0003690">
    <property type="term" value="F:double-stranded DNA binding"/>
    <property type="evidence" value="ECO:0007669"/>
    <property type="project" value="UniProtKB-UniRule"/>
</dbReference>
<dbReference type="GO" id="GO:0000724">
    <property type="term" value="P:double-strand break repair via homologous recombination"/>
    <property type="evidence" value="ECO:0007669"/>
    <property type="project" value="UniProtKB-UniRule"/>
</dbReference>
<dbReference type="CDD" id="cd17932">
    <property type="entry name" value="DEXQc_UvrD"/>
    <property type="match status" value="2"/>
</dbReference>
<dbReference type="FunFam" id="3.40.50.300:FF:001196">
    <property type="entry name" value="ATP-dependent helicase/nuclease subunit A"/>
    <property type="match status" value="1"/>
</dbReference>
<dbReference type="FunFam" id="3.40.50.300:FF:001715">
    <property type="entry name" value="ATP-dependent helicase/nuclease subunit A"/>
    <property type="match status" value="1"/>
</dbReference>
<dbReference type="Gene3D" id="3.90.320.10">
    <property type="match status" value="1"/>
</dbReference>
<dbReference type="Gene3D" id="3.40.50.300">
    <property type="entry name" value="P-loop containing nucleotide triphosphate hydrolases"/>
    <property type="match status" value="4"/>
</dbReference>
<dbReference type="Gene3D" id="1.10.486.10">
    <property type="entry name" value="PCRA, domain 4"/>
    <property type="match status" value="1"/>
</dbReference>
<dbReference type="HAMAP" id="MF_01451">
    <property type="entry name" value="AddA"/>
    <property type="match status" value="1"/>
</dbReference>
<dbReference type="InterPro" id="IPR014152">
    <property type="entry name" value="AddA"/>
</dbReference>
<dbReference type="InterPro" id="IPR014017">
    <property type="entry name" value="DNA_helicase_UvrD-like_C"/>
</dbReference>
<dbReference type="InterPro" id="IPR000212">
    <property type="entry name" value="DNA_helicase_UvrD/REP"/>
</dbReference>
<dbReference type="InterPro" id="IPR027417">
    <property type="entry name" value="P-loop_NTPase"/>
</dbReference>
<dbReference type="InterPro" id="IPR011604">
    <property type="entry name" value="PDDEXK-like_dom_sf"/>
</dbReference>
<dbReference type="InterPro" id="IPR038726">
    <property type="entry name" value="PDDEXK_AddAB-type"/>
</dbReference>
<dbReference type="InterPro" id="IPR011335">
    <property type="entry name" value="Restrct_endonuc-II-like"/>
</dbReference>
<dbReference type="InterPro" id="IPR014016">
    <property type="entry name" value="UvrD-like_ATP-bd"/>
</dbReference>
<dbReference type="NCBIfam" id="TIGR02785">
    <property type="entry name" value="addA_Gpos"/>
    <property type="match status" value="1"/>
</dbReference>
<dbReference type="PANTHER" id="PTHR11070:SF48">
    <property type="entry name" value="ATP-DEPENDENT HELICASE_NUCLEASE SUBUNIT A"/>
    <property type="match status" value="1"/>
</dbReference>
<dbReference type="PANTHER" id="PTHR11070">
    <property type="entry name" value="UVRD / RECB / PCRA DNA HELICASE FAMILY MEMBER"/>
    <property type="match status" value="1"/>
</dbReference>
<dbReference type="Pfam" id="PF12705">
    <property type="entry name" value="PDDEXK_1"/>
    <property type="match status" value="1"/>
</dbReference>
<dbReference type="Pfam" id="PF00580">
    <property type="entry name" value="UvrD-helicase"/>
    <property type="match status" value="1"/>
</dbReference>
<dbReference type="Pfam" id="PF13361">
    <property type="entry name" value="UvrD_C"/>
    <property type="match status" value="1"/>
</dbReference>
<dbReference type="SUPFAM" id="SSF52540">
    <property type="entry name" value="P-loop containing nucleoside triphosphate hydrolases"/>
    <property type="match status" value="1"/>
</dbReference>
<dbReference type="SUPFAM" id="SSF52980">
    <property type="entry name" value="Restriction endonuclease-like"/>
    <property type="match status" value="1"/>
</dbReference>
<dbReference type="PROSITE" id="PS51198">
    <property type="entry name" value="UVRD_HELICASE_ATP_BIND"/>
    <property type="match status" value="1"/>
</dbReference>
<dbReference type="PROSITE" id="PS51217">
    <property type="entry name" value="UVRD_HELICASE_CTER"/>
    <property type="match status" value="1"/>
</dbReference>
<accession>Q2FIA8</accession>
<evidence type="ECO:0000255" key="1">
    <source>
        <dbReference type="HAMAP-Rule" id="MF_01451"/>
    </source>
</evidence>
<comment type="function">
    <text evidence="1">The heterodimer acts as both an ATP-dependent DNA helicase and an ATP-dependent, dual-direction single-stranded exonuclease. Recognizes the chi site generating a DNA molecule suitable for the initiation of homologous recombination. The AddA nuclease domain is required for chi fragment generation; this subunit has the helicase and 3' -&gt; 5' nuclease activities.</text>
</comment>
<comment type="catalytic activity">
    <reaction evidence="1">
        <text>Couples ATP hydrolysis with the unwinding of duplex DNA by translocating in the 3'-5' direction.</text>
        <dbReference type="EC" id="5.6.2.4"/>
    </reaction>
</comment>
<comment type="catalytic activity">
    <reaction evidence="1">
        <text>ATP + H2O = ADP + phosphate + H(+)</text>
        <dbReference type="Rhea" id="RHEA:13065"/>
        <dbReference type="ChEBI" id="CHEBI:15377"/>
        <dbReference type="ChEBI" id="CHEBI:15378"/>
        <dbReference type="ChEBI" id="CHEBI:30616"/>
        <dbReference type="ChEBI" id="CHEBI:43474"/>
        <dbReference type="ChEBI" id="CHEBI:456216"/>
        <dbReference type="EC" id="5.6.2.4"/>
    </reaction>
</comment>
<comment type="cofactor">
    <cofactor evidence="1">
        <name>Mg(2+)</name>
        <dbReference type="ChEBI" id="CHEBI:18420"/>
    </cofactor>
</comment>
<comment type="subunit">
    <text evidence="1">Heterodimer of AddA and AddB/RexB.</text>
</comment>
<comment type="similarity">
    <text evidence="1">Belongs to the helicase family. AddA subfamily.</text>
</comment>
<keyword id="KW-0067">ATP-binding</keyword>
<keyword id="KW-0227">DNA damage</keyword>
<keyword id="KW-0234">DNA repair</keyword>
<keyword id="KW-0238">DNA-binding</keyword>
<keyword id="KW-0269">Exonuclease</keyword>
<keyword id="KW-0347">Helicase</keyword>
<keyword id="KW-0378">Hydrolase</keyword>
<keyword id="KW-0413">Isomerase</keyword>
<keyword id="KW-0540">Nuclease</keyword>
<keyword id="KW-0547">Nucleotide-binding</keyword>
<feature type="chain" id="PRO_0000379320" description="ATP-dependent helicase/nuclease subunit A">
    <location>
        <begin position="1"/>
        <end position="1217"/>
    </location>
</feature>
<feature type="domain" description="UvrD-like helicase ATP-binding" evidence="1">
    <location>
        <begin position="10"/>
        <end position="475"/>
    </location>
</feature>
<feature type="domain" description="UvrD-like helicase C-terminal" evidence="1">
    <location>
        <begin position="476"/>
        <end position="786"/>
    </location>
</feature>
<feature type="binding site" evidence="1">
    <location>
        <begin position="31"/>
        <end position="38"/>
    </location>
    <ligand>
        <name>ATP</name>
        <dbReference type="ChEBI" id="CHEBI:30616"/>
    </ligand>
</feature>
<reference key="1">
    <citation type="journal article" date="2006" name="Lancet">
        <title>Complete genome sequence of USA300, an epidemic clone of community-acquired meticillin-resistant Staphylococcus aureus.</title>
        <authorList>
            <person name="Diep B.A."/>
            <person name="Gill S.R."/>
            <person name="Chang R.F."/>
            <person name="Phan T.H."/>
            <person name="Chen J.H."/>
            <person name="Davidson M.G."/>
            <person name="Lin F."/>
            <person name="Lin J."/>
            <person name="Carleton H.A."/>
            <person name="Mongodin E.F."/>
            <person name="Sensabaugh G.F."/>
            <person name="Perdreau-Remington F."/>
        </authorList>
    </citation>
    <scope>NUCLEOTIDE SEQUENCE [LARGE SCALE GENOMIC DNA]</scope>
    <source>
        <strain>USA300</strain>
    </source>
</reference>
<gene>
    <name evidence="1" type="primary">addA</name>
    <name type="synonym">rexA</name>
    <name type="ordered locus">SAUSA300_0870</name>
</gene>